<protein>
    <recommendedName>
        <fullName evidence="1">Imidazole glycerol phosphate synthase subunit HisF</fullName>
        <ecNumber evidence="1">4.3.2.10</ecNumber>
    </recommendedName>
    <alternativeName>
        <fullName evidence="1">IGP synthase cyclase subunit</fullName>
    </alternativeName>
    <alternativeName>
        <fullName evidence="1">IGP synthase subunit HisF</fullName>
    </alternativeName>
    <alternativeName>
        <fullName evidence="1">ImGP synthase subunit HisF</fullName>
        <shortName evidence="1">IGPS subunit HisF</shortName>
    </alternativeName>
</protein>
<keyword id="KW-0028">Amino-acid biosynthesis</keyword>
<keyword id="KW-0963">Cytoplasm</keyword>
<keyword id="KW-0368">Histidine biosynthesis</keyword>
<keyword id="KW-0456">Lyase</keyword>
<proteinExistence type="inferred from homology"/>
<sequence length="258" mass="28454">MLAKRIIPCLDVRDGQVVKGVQFRNHEIIGDIVPLAKRYAEEGADELVFYDITASSDGRVVDKSWVSRVAEVIDIPFCVAGGIKSLEDAAKILSFGADKISINSPALADPTLITRLADRFGVQCIVVGIDTWYDAETGKYHVNQYTGDESRTRVTQWETLDWVQEVQKRGAGEIVLNMMNQDGVRNGYDLKQLKKVREVCHVPLIASGGAGTMEHFLEAFRDADVDGALAASVFHKQIINIGELKAYLATQGVEIRIC</sequence>
<organism>
    <name type="scientific">Escherichia coli O6:K15:H31 (strain 536 / UPEC)</name>
    <dbReference type="NCBI Taxonomy" id="362663"/>
    <lineage>
        <taxon>Bacteria</taxon>
        <taxon>Pseudomonadati</taxon>
        <taxon>Pseudomonadota</taxon>
        <taxon>Gammaproteobacteria</taxon>
        <taxon>Enterobacterales</taxon>
        <taxon>Enterobacteriaceae</taxon>
        <taxon>Escherichia</taxon>
    </lineage>
</organism>
<dbReference type="EC" id="4.3.2.10" evidence="1"/>
<dbReference type="EMBL" id="CP000247">
    <property type="protein sequence ID" value="ABG70067.1"/>
    <property type="molecule type" value="Genomic_DNA"/>
</dbReference>
<dbReference type="RefSeq" id="WP_000880185.1">
    <property type="nucleotide sequence ID" value="NC_008253.1"/>
</dbReference>
<dbReference type="SMR" id="Q0TG62"/>
<dbReference type="KEGG" id="ecp:ECP_2068"/>
<dbReference type="HOGENOM" id="CLU_048577_4_0_6"/>
<dbReference type="UniPathway" id="UPA00031">
    <property type="reaction ID" value="UER00010"/>
</dbReference>
<dbReference type="Proteomes" id="UP000009182">
    <property type="component" value="Chromosome"/>
</dbReference>
<dbReference type="GO" id="GO:0005737">
    <property type="term" value="C:cytoplasm"/>
    <property type="evidence" value="ECO:0007669"/>
    <property type="project" value="UniProtKB-SubCell"/>
</dbReference>
<dbReference type="GO" id="GO:0000107">
    <property type="term" value="F:imidazoleglycerol-phosphate synthase activity"/>
    <property type="evidence" value="ECO:0007669"/>
    <property type="project" value="UniProtKB-UniRule"/>
</dbReference>
<dbReference type="GO" id="GO:0016829">
    <property type="term" value="F:lyase activity"/>
    <property type="evidence" value="ECO:0007669"/>
    <property type="project" value="UniProtKB-KW"/>
</dbReference>
<dbReference type="GO" id="GO:0000105">
    <property type="term" value="P:L-histidine biosynthetic process"/>
    <property type="evidence" value="ECO:0007669"/>
    <property type="project" value="UniProtKB-UniRule"/>
</dbReference>
<dbReference type="CDD" id="cd04731">
    <property type="entry name" value="HisF"/>
    <property type="match status" value="1"/>
</dbReference>
<dbReference type="FunFam" id="3.20.20.70:FF:000006">
    <property type="entry name" value="Imidazole glycerol phosphate synthase subunit HisF"/>
    <property type="match status" value="1"/>
</dbReference>
<dbReference type="Gene3D" id="3.20.20.70">
    <property type="entry name" value="Aldolase class I"/>
    <property type="match status" value="1"/>
</dbReference>
<dbReference type="HAMAP" id="MF_01013">
    <property type="entry name" value="HisF"/>
    <property type="match status" value="1"/>
</dbReference>
<dbReference type="InterPro" id="IPR013785">
    <property type="entry name" value="Aldolase_TIM"/>
</dbReference>
<dbReference type="InterPro" id="IPR006062">
    <property type="entry name" value="His_biosynth"/>
</dbReference>
<dbReference type="InterPro" id="IPR004651">
    <property type="entry name" value="HisF"/>
</dbReference>
<dbReference type="InterPro" id="IPR050064">
    <property type="entry name" value="IGPS_HisA/HisF"/>
</dbReference>
<dbReference type="InterPro" id="IPR011060">
    <property type="entry name" value="RibuloseP-bd_barrel"/>
</dbReference>
<dbReference type="NCBIfam" id="TIGR00735">
    <property type="entry name" value="hisF"/>
    <property type="match status" value="1"/>
</dbReference>
<dbReference type="PANTHER" id="PTHR21235:SF2">
    <property type="entry name" value="IMIDAZOLE GLYCEROL PHOSPHATE SYNTHASE HISHF"/>
    <property type="match status" value="1"/>
</dbReference>
<dbReference type="PANTHER" id="PTHR21235">
    <property type="entry name" value="IMIDAZOLE GLYCEROL PHOSPHATE SYNTHASE SUBUNIT HISF/H IGP SYNTHASE SUBUNIT HISF/H"/>
    <property type="match status" value="1"/>
</dbReference>
<dbReference type="Pfam" id="PF00977">
    <property type="entry name" value="His_biosynth"/>
    <property type="match status" value="1"/>
</dbReference>
<dbReference type="SUPFAM" id="SSF51366">
    <property type="entry name" value="Ribulose-phoshate binding barrel"/>
    <property type="match status" value="1"/>
</dbReference>
<accession>Q0TG62</accession>
<evidence type="ECO:0000255" key="1">
    <source>
        <dbReference type="HAMAP-Rule" id="MF_01013"/>
    </source>
</evidence>
<reference key="1">
    <citation type="journal article" date="2006" name="Mol. Microbiol.">
        <title>Role of pathogenicity island-associated integrases in the genome plasticity of uropathogenic Escherichia coli strain 536.</title>
        <authorList>
            <person name="Hochhut B."/>
            <person name="Wilde C."/>
            <person name="Balling G."/>
            <person name="Middendorf B."/>
            <person name="Dobrindt U."/>
            <person name="Brzuszkiewicz E."/>
            <person name="Gottschalk G."/>
            <person name="Carniel E."/>
            <person name="Hacker J."/>
        </authorList>
    </citation>
    <scope>NUCLEOTIDE SEQUENCE [LARGE SCALE GENOMIC DNA]</scope>
    <source>
        <strain>536 / UPEC</strain>
    </source>
</reference>
<comment type="function">
    <text evidence="1">IGPS catalyzes the conversion of PRFAR and glutamine to IGP, AICAR and glutamate. The HisF subunit catalyzes the cyclization activity that produces IGP and AICAR from PRFAR using the ammonia provided by the HisH subunit.</text>
</comment>
<comment type="catalytic activity">
    <reaction evidence="1">
        <text>5-[(5-phospho-1-deoxy-D-ribulos-1-ylimino)methylamino]-1-(5-phospho-beta-D-ribosyl)imidazole-4-carboxamide + L-glutamine = D-erythro-1-(imidazol-4-yl)glycerol 3-phosphate + 5-amino-1-(5-phospho-beta-D-ribosyl)imidazole-4-carboxamide + L-glutamate + H(+)</text>
        <dbReference type="Rhea" id="RHEA:24793"/>
        <dbReference type="ChEBI" id="CHEBI:15378"/>
        <dbReference type="ChEBI" id="CHEBI:29985"/>
        <dbReference type="ChEBI" id="CHEBI:58278"/>
        <dbReference type="ChEBI" id="CHEBI:58359"/>
        <dbReference type="ChEBI" id="CHEBI:58475"/>
        <dbReference type="ChEBI" id="CHEBI:58525"/>
        <dbReference type="EC" id="4.3.2.10"/>
    </reaction>
</comment>
<comment type="pathway">
    <text evidence="1">Amino-acid biosynthesis; L-histidine biosynthesis; L-histidine from 5-phospho-alpha-D-ribose 1-diphosphate: step 5/9.</text>
</comment>
<comment type="subunit">
    <text evidence="1">Heterodimer of HisH and HisF.</text>
</comment>
<comment type="subcellular location">
    <subcellularLocation>
        <location evidence="1">Cytoplasm</location>
    </subcellularLocation>
</comment>
<comment type="similarity">
    <text evidence="1">Belongs to the HisA/HisF family.</text>
</comment>
<feature type="chain" id="PRO_1000063058" description="Imidazole glycerol phosphate synthase subunit HisF">
    <location>
        <begin position="1"/>
        <end position="258"/>
    </location>
</feature>
<feature type="active site" evidence="1">
    <location>
        <position position="11"/>
    </location>
</feature>
<feature type="active site" evidence="1">
    <location>
        <position position="130"/>
    </location>
</feature>
<gene>
    <name evidence="1" type="primary">hisF</name>
    <name type="ordered locus">ECP_2068</name>
</gene>
<name>HIS6_ECOL5</name>